<organism>
    <name type="scientific">Hyphomonas neptunium (strain ATCC 15444)</name>
    <dbReference type="NCBI Taxonomy" id="228405"/>
    <lineage>
        <taxon>Bacteria</taxon>
        <taxon>Pseudomonadati</taxon>
        <taxon>Pseudomonadota</taxon>
        <taxon>Alphaproteobacteria</taxon>
        <taxon>Hyphomonadales</taxon>
        <taxon>Hyphomonadaceae</taxon>
        <taxon>Hyphomonas</taxon>
    </lineage>
</organism>
<gene>
    <name evidence="1" type="primary">rpsK</name>
    <name type="ordered locus">HNE_2828</name>
</gene>
<protein>
    <recommendedName>
        <fullName evidence="1">Small ribosomal subunit protein uS11</fullName>
    </recommendedName>
    <alternativeName>
        <fullName evidence="2">30S ribosomal protein S11</fullName>
    </alternativeName>
</protein>
<keyword id="KW-1185">Reference proteome</keyword>
<keyword id="KW-0687">Ribonucleoprotein</keyword>
<keyword id="KW-0689">Ribosomal protein</keyword>
<keyword id="KW-0694">RNA-binding</keyword>
<keyword id="KW-0699">rRNA-binding</keyword>
<sequence length="129" mass="14014">MAREATRIRRRERKNITSGIVHVNSSFNNTMVTITDAQGNTISWSSSGVMNFKGSRKSTPYAAQMAAEDAAKKAKEHGLQTVEVRVRGPGSGRESALRALQAAGLTVTAINDTTPIPHNGCRPPKRRRV</sequence>
<feature type="chain" id="PRO_0000294771" description="Small ribosomal subunit protein uS11">
    <location>
        <begin position="1"/>
        <end position="129"/>
    </location>
</feature>
<name>RS11_HYPNA</name>
<comment type="function">
    <text evidence="1">Located on the platform of the 30S subunit, it bridges several disparate RNA helices of the 16S rRNA. Forms part of the Shine-Dalgarno cleft in the 70S ribosome.</text>
</comment>
<comment type="subunit">
    <text evidence="1">Part of the 30S ribosomal subunit. Interacts with proteins S7 and S18. Binds to IF-3.</text>
</comment>
<comment type="similarity">
    <text evidence="1">Belongs to the universal ribosomal protein uS11 family.</text>
</comment>
<reference key="1">
    <citation type="journal article" date="2006" name="J. Bacteriol.">
        <title>Comparative genomic evidence for a close relationship between the dimorphic prosthecate bacteria Hyphomonas neptunium and Caulobacter crescentus.</title>
        <authorList>
            <person name="Badger J.H."/>
            <person name="Hoover T.R."/>
            <person name="Brun Y.V."/>
            <person name="Weiner R.M."/>
            <person name="Laub M.T."/>
            <person name="Alexandre G."/>
            <person name="Mrazek J."/>
            <person name="Ren Q."/>
            <person name="Paulsen I.T."/>
            <person name="Nelson K.E."/>
            <person name="Khouri H.M."/>
            <person name="Radune D."/>
            <person name="Sosa J."/>
            <person name="Dodson R.J."/>
            <person name="Sullivan S.A."/>
            <person name="Rosovitz M.J."/>
            <person name="Madupu R."/>
            <person name="Brinkac L.M."/>
            <person name="Durkin A.S."/>
            <person name="Daugherty S.C."/>
            <person name="Kothari S.P."/>
            <person name="Giglio M.G."/>
            <person name="Zhou L."/>
            <person name="Haft D.H."/>
            <person name="Selengut J.D."/>
            <person name="Davidsen T.M."/>
            <person name="Yang Q."/>
            <person name="Zafar N."/>
            <person name="Ward N.L."/>
        </authorList>
    </citation>
    <scope>NUCLEOTIDE SEQUENCE [LARGE SCALE GENOMIC DNA]</scope>
    <source>
        <strain>ATCC 15444</strain>
    </source>
</reference>
<proteinExistence type="inferred from homology"/>
<dbReference type="EMBL" id="CP000158">
    <property type="protein sequence ID" value="ABI77910.1"/>
    <property type="molecule type" value="Genomic_DNA"/>
</dbReference>
<dbReference type="RefSeq" id="WP_011647803.1">
    <property type="nucleotide sequence ID" value="NC_008358.1"/>
</dbReference>
<dbReference type="SMR" id="Q0BYD7"/>
<dbReference type="STRING" id="228405.HNE_2828"/>
<dbReference type="KEGG" id="hne:HNE_2828"/>
<dbReference type="eggNOG" id="COG0100">
    <property type="taxonomic scope" value="Bacteria"/>
</dbReference>
<dbReference type="HOGENOM" id="CLU_072439_5_0_5"/>
<dbReference type="Proteomes" id="UP000001959">
    <property type="component" value="Chromosome"/>
</dbReference>
<dbReference type="GO" id="GO:1990904">
    <property type="term" value="C:ribonucleoprotein complex"/>
    <property type="evidence" value="ECO:0007669"/>
    <property type="project" value="UniProtKB-KW"/>
</dbReference>
<dbReference type="GO" id="GO:0005840">
    <property type="term" value="C:ribosome"/>
    <property type="evidence" value="ECO:0007669"/>
    <property type="project" value="UniProtKB-KW"/>
</dbReference>
<dbReference type="GO" id="GO:0019843">
    <property type="term" value="F:rRNA binding"/>
    <property type="evidence" value="ECO:0007669"/>
    <property type="project" value="UniProtKB-UniRule"/>
</dbReference>
<dbReference type="GO" id="GO:0003735">
    <property type="term" value="F:structural constituent of ribosome"/>
    <property type="evidence" value="ECO:0007669"/>
    <property type="project" value="InterPro"/>
</dbReference>
<dbReference type="GO" id="GO:0006412">
    <property type="term" value="P:translation"/>
    <property type="evidence" value="ECO:0007669"/>
    <property type="project" value="UniProtKB-UniRule"/>
</dbReference>
<dbReference type="FunFam" id="3.30.420.80:FF:000001">
    <property type="entry name" value="30S ribosomal protein S11"/>
    <property type="match status" value="1"/>
</dbReference>
<dbReference type="Gene3D" id="3.30.420.80">
    <property type="entry name" value="Ribosomal protein S11"/>
    <property type="match status" value="1"/>
</dbReference>
<dbReference type="HAMAP" id="MF_01310">
    <property type="entry name" value="Ribosomal_uS11"/>
    <property type="match status" value="1"/>
</dbReference>
<dbReference type="InterPro" id="IPR001971">
    <property type="entry name" value="Ribosomal_uS11"/>
</dbReference>
<dbReference type="InterPro" id="IPR019981">
    <property type="entry name" value="Ribosomal_uS11_bac-type"/>
</dbReference>
<dbReference type="InterPro" id="IPR018102">
    <property type="entry name" value="Ribosomal_uS11_CS"/>
</dbReference>
<dbReference type="InterPro" id="IPR036967">
    <property type="entry name" value="Ribosomal_uS11_sf"/>
</dbReference>
<dbReference type="NCBIfam" id="NF003698">
    <property type="entry name" value="PRK05309.1"/>
    <property type="match status" value="1"/>
</dbReference>
<dbReference type="NCBIfam" id="TIGR03632">
    <property type="entry name" value="uS11_bact"/>
    <property type="match status" value="1"/>
</dbReference>
<dbReference type="PANTHER" id="PTHR11759">
    <property type="entry name" value="40S RIBOSOMAL PROTEIN S14/30S RIBOSOMAL PROTEIN S11"/>
    <property type="match status" value="1"/>
</dbReference>
<dbReference type="Pfam" id="PF00411">
    <property type="entry name" value="Ribosomal_S11"/>
    <property type="match status" value="1"/>
</dbReference>
<dbReference type="PIRSF" id="PIRSF002131">
    <property type="entry name" value="Ribosomal_S11"/>
    <property type="match status" value="1"/>
</dbReference>
<dbReference type="SUPFAM" id="SSF53137">
    <property type="entry name" value="Translational machinery components"/>
    <property type="match status" value="1"/>
</dbReference>
<dbReference type="PROSITE" id="PS00054">
    <property type="entry name" value="RIBOSOMAL_S11"/>
    <property type="match status" value="1"/>
</dbReference>
<evidence type="ECO:0000255" key="1">
    <source>
        <dbReference type="HAMAP-Rule" id="MF_01310"/>
    </source>
</evidence>
<evidence type="ECO:0000305" key="2"/>
<accession>Q0BYD7</accession>